<organism>
    <name type="scientific">Equine herpesvirus 1 (strain V592)</name>
    <name type="common">EHV-1</name>
    <name type="synonym">Equine abortion virus</name>
    <dbReference type="NCBI Taxonomy" id="310273"/>
    <lineage>
        <taxon>Viruses</taxon>
        <taxon>Duplodnaviria</taxon>
        <taxon>Heunggongvirae</taxon>
        <taxon>Peploviricota</taxon>
        <taxon>Herviviricetes</taxon>
        <taxon>Herpesvirales</taxon>
        <taxon>Orthoherpesviridae</taxon>
        <taxon>Alphaherpesvirinae</taxon>
        <taxon>Varicellovirus</taxon>
        <taxon>Varicellovirus equidalpha1</taxon>
        <taxon>Equid alphaherpesvirus 1</taxon>
    </lineage>
</organism>
<organismHost>
    <name type="scientific">Equus caballus</name>
    <name type="common">Horse</name>
    <dbReference type="NCBI Taxonomy" id="9796"/>
</organismHost>
<keyword id="KW-1032">Host cell membrane</keyword>
<keyword id="KW-1038">Host endoplasmic reticulum</keyword>
<keyword id="KW-1040">Host Golgi apparatus</keyword>
<keyword id="KW-1043">Host membrane</keyword>
<keyword id="KW-0472">Membrane</keyword>
<keyword id="KW-0597">Phosphoprotein</keyword>
<keyword id="KW-0735">Signal-anchor</keyword>
<keyword id="KW-0812">Transmembrane</keyword>
<keyword id="KW-1133">Transmembrane helix</keyword>
<keyword id="KW-0261">Viral envelope protein</keyword>
<keyword id="KW-0946">Virion</keyword>
<feature type="chain" id="PRO_0000116136" description="Envelope protein US9 homolog">
    <location>
        <begin position="1"/>
        <end position="219"/>
    </location>
</feature>
<feature type="topological domain" description="Intravirion" evidence="1">
    <location>
        <begin position="1"/>
        <end position="193"/>
    </location>
</feature>
<feature type="transmembrane region" description="Helical; Signal-anchor for type II membrane protein" evidence="1">
    <location>
        <begin position="194"/>
        <end position="214"/>
    </location>
</feature>
<feature type="topological domain" description="Virion surface" evidence="1">
    <location>
        <begin position="215"/>
        <end position="219"/>
    </location>
</feature>
<feature type="region of interest" description="Acidic">
    <location>
        <begin position="153"/>
        <end position="168"/>
    </location>
</feature>
<feature type="short sequence motif" description="Di-leucine internalization motif" evidence="2">
    <location>
        <begin position="145"/>
        <end position="146"/>
    </location>
</feature>
<feature type="modified residue" description="Phosphoserine; by host CK2" evidence="2">
    <location>
        <position position="163"/>
    </location>
</feature>
<feature type="modified residue" description="Phosphoserine; by host CK2" evidence="2">
    <location>
        <position position="165"/>
    </location>
</feature>
<comment type="function">
    <text evidence="1">Essential for the anterograde spread of the infection throughout the host nervous system. Together with the gE/gI heterodimer, US9 is involved in the sorting and transport of viral structural components toward axon tips (By similarity).</text>
</comment>
<comment type="subcellular location">
    <subcellularLocation>
        <location evidence="1">Virion membrane</location>
        <topology evidence="1">Single-pass type II membrane protein</topology>
    </subcellularLocation>
    <subcellularLocation>
        <location evidence="1">Host Golgi apparatus membrane</location>
        <topology evidence="1">Single-pass type II membrane protein</topology>
    </subcellularLocation>
    <subcellularLocation>
        <location evidence="1">Host smooth endoplasmic reticulum membrane</location>
        <topology evidence="1">Single-pass type II membrane protein</topology>
    </subcellularLocation>
    <subcellularLocation>
        <location evidence="3">Host cell membrane</location>
        <topology evidence="3">Single-pass type II membrane protein</topology>
    </subcellularLocation>
    <text>During virion morphogenesis, this protein probably accumulates in the endosomes and trans-Golgi where secondary envelopment occurs. It is probably transported to the cell surface from where it is endocytosed and directed to the trans-Golgi network (TGN), maybe through an interaction with PACS-1 sorting protein.</text>
</comment>
<comment type="PTM">
    <text evidence="3">Phosphorylated on serines within the acidic cluster. Phosphorylation determines whether endocytosed viral US9 traffics to the trans-Golgi network or recycles to the cell membrane.</text>
</comment>
<comment type="similarity">
    <text evidence="3">Belongs to the alphaherpesvirinae envelope protein US9 family.</text>
</comment>
<evidence type="ECO:0000250" key="1"/>
<evidence type="ECO:0000255" key="2"/>
<evidence type="ECO:0000305" key="3"/>
<evidence type="ECO:0000312" key="4">
    <source>
        <dbReference type="EMBL" id="AAS45964.1"/>
    </source>
</evidence>
<proteinExistence type="inferred from homology"/>
<gene>
    <name type="ordered locus">76</name>
</gene>
<accession>Q6S6V5</accession>
<reference evidence="3 4" key="1">
    <citation type="submission" date="2003-11" db="EMBL/GenBank/DDBJ databases">
        <authorList>
            <person name="Davis-Poynter N."/>
            <person name="Nugent J."/>
            <person name="Birch-Machin I."/>
            <person name="Allen G.P."/>
        </authorList>
    </citation>
    <scope>NUCLEOTIDE SEQUENCE [LARGE SCALE GENOMIC DNA]</scope>
</reference>
<protein>
    <recommendedName>
        <fullName>Envelope protein US9 homolog</fullName>
    </recommendedName>
    <alternativeName>
        <fullName>Envelope protein 76</fullName>
    </alternativeName>
    <alternativeName>
        <fullName>ORF76 protein</fullName>
    </alternativeName>
</protein>
<dbReference type="EMBL" id="AY464052">
    <property type="protein sequence ID" value="AAS45964.1"/>
    <property type="molecule type" value="Genomic_DNA"/>
</dbReference>
<dbReference type="SMR" id="Q6S6V5"/>
<dbReference type="Proteomes" id="UP000008296">
    <property type="component" value="Segment"/>
</dbReference>
<dbReference type="GO" id="GO:0043657">
    <property type="term" value="C:host cell"/>
    <property type="evidence" value="ECO:0007669"/>
    <property type="project" value="GOC"/>
</dbReference>
<dbReference type="GO" id="GO:0044178">
    <property type="term" value="C:host cell Golgi membrane"/>
    <property type="evidence" value="ECO:0007669"/>
    <property type="project" value="UniProtKB-SubCell"/>
</dbReference>
<dbReference type="GO" id="GO:0020002">
    <property type="term" value="C:host cell plasma membrane"/>
    <property type="evidence" value="ECO:0007669"/>
    <property type="project" value="UniProtKB-SubCell"/>
</dbReference>
<dbReference type="GO" id="GO:0044171">
    <property type="term" value="C:host cell smooth endoplasmic reticulum membrane"/>
    <property type="evidence" value="ECO:0007669"/>
    <property type="project" value="UniProtKB-SubCell"/>
</dbReference>
<dbReference type="GO" id="GO:0016020">
    <property type="term" value="C:membrane"/>
    <property type="evidence" value="ECO:0007669"/>
    <property type="project" value="UniProtKB-KW"/>
</dbReference>
<dbReference type="GO" id="GO:0019031">
    <property type="term" value="C:viral envelope"/>
    <property type="evidence" value="ECO:0007669"/>
    <property type="project" value="UniProtKB-KW"/>
</dbReference>
<dbReference type="GO" id="GO:0055036">
    <property type="term" value="C:virion membrane"/>
    <property type="evidence" value="ECO:0007669"/>
    <property type="project" value="UniProtKB-SubCell"/>
</dbReference>
<dbReference type="GO" id="GO:0075733">
    <property type="term" value="P:intracellular transport of virus"/>
    <property type="evidence" value="ECO:0007669"/>
    <property type="project" value="InterPro"/>
</dbReference>
<dbReference type="InterPro" id="IPR009278">
    <property type="entry name" value="Herpes_US9"/>
</dbReference>
<dbReference type="Pfam" id="PF06072">
    <property type="entry name" value="Herpes_US9"/>
    <property type="match status" value="1"/>
</dbReference>
<sequence length="219" mass="22358">MEKAEAAAVVIPLSVSNPSYRGSGMSDQEVSEEQSAGDAWVSAAMAAAEAVAAAATSTGIDNTNDYTYTAASENGDPGFTLGDNTYGPNGAASGCPSPPSPEVVGLEMVVVSSLAPEIAAAVPADTISASAAAPATRVDDGNAPLLGPGQAQDYDSESGCYYSESDNETASMFIRRVGRRQARRHRRRRVALTVAGVILVVVLCAISGIVGAFLARVFP</sequence>
<name>US9_EHV1V</name>